<proteinExistence type="inferred from homology"/>
<keyword id="KW-0066">ATP synthesis</keyword>
<keyword id="KW-0997">Cell inner membrane</keyword>
<keyword id="KW-1003">Cell membrane</keyword>
<keyword id="KW-0139">CF(1)</keyword>
<keyword id="KW-0375">Hydrogen ion transport</keyword>
<keyword id="KW-0406">Ion transport</keyword>
<keyword id="KW-0472">Membrane</keyword>
<keyword id="KW-0813">Transport</keyword>
<sequence length="141" mass="14929">MATIKVDVVSAEEQIFSGQAKFVALPGEAGELGILPGHTPLITRIRPGAVRIESESGDEEFVFVAGGILEVQPGAVTVLADTAIRGKDLDAAKAEEARKRAEETLQNAKSDIDLAKAQSELATAMAQLEAIQRLAKIRGKH</sequence>
<comment type="function">
    <text evidence="1">Produces ATP from ADP in the presence of a proton gradient across the membrane.</text>
</comment>
<comment type="subunit">
    <text evidence="1">F-type ATPases have 2 components, CF(1) - the catalytic core - and CF(0) - the membrane proton channel. CF(1) has five subunits: alpha(3), beta(3), gamma(1), delta(1), epsilon(1). CF(0) has three main subunits: a, b and c.</text>
</comment>
<comment type="subcellular location">
    <subcellularLocation>
        <location evidence="1">Cell inner membrane</location>
        <topology evidence="1">Peripheral membrane protein</topology>
    </subcellularLocation>
</comment>
<comment type="similarity">
    <text evidence="1">Belongs to the ATPase epsilon chain family.</text>
</comment>
<feature type="chain" id="PRO_1000056461" description="ATP synthase epsilon chain">
    <location>
        <begin position="1"/>
        <end position="141"/>
    </location>
</feature>
<accession>A2S6J7</accession>
<evidence type="ECO:0000255" key="1">
    <source>
        <dbReference type="HAMAP-Rule" id="MF_00530"/>
    </source>
</evidence>
<reference key="1">
    <citation type="journal article" date="2010" name="Genome Biol. Evol.">
        <title>Continuing evolution of Burkholderia mallei through genome reduction and large-scale rearrangements.</title>
        <authorList>
            <person name="Losada L."/>
            <person name="Ronning C.M."/>
            <person name="DeShazer D."/>
            <person name="Woods D."/>
            <person name="Fedorova N."/>
            <person name="Kim H.S."/>
            <person name="Shabalina S.A."/>
            <person name="Pearson T.R."/>
            <person name="Brinkac L."/>
            <person name="Tan P."/>
            <person name="Nandi T."/>
            <person name="Crabtree J."/>
            <person name="Badger J."/>
            <person name="Beckstrom-Sternberg S."/>
            <person name="Saqib M."/>
            <person name="Schutzer S.E."/>
            <person name="Keim P."/>
            <person name="Nierman W.C."/>
        </authorList>
    </citation>
    <scope>NUCLEOTIDE SEQUENCE [LARGE SCALE GENOMIC DNA]</scope>
    <source>
        <strain>NCTC 10229</strain>
    </source>
</reference>
<dbReference type="EMBL" id="CP000546">
    <property type="protein sequence ID" value="ABN03482.1"/>
    <property type="molecule type" value="Genomic_DNA"/>
</dbReference>
<dbReference type="RefSeq" id="WP_004195832.1">
    <property type="nucleotide sequence ID" value="NC_008836.1"/>
</dbReference>
<dbReference type="SMR" id="A2S6J7"/>
<dbReference type="KEGG" id="bml:BMA10229_A1586"/>
<dbReference type="HOGENOM" id="CLU_084338_2_0_4"/>
<dbReference type="Proteomes" id="UP000002283">
    <property type="component" value="Chromosome I"/>
</dbReference>
<dbReference type="GO" id="GO:0005886">
    <property type="term" value="C:plasma membrane"/>
    <property type="evidence" value="ECO:0007669"/>
    <property type="project" value="UniProtKB-SubCell"/>
</dbReference>
<dbReference type="GO" id="GO:0045259">
    <property type="term" value="C:proton-transporting ATP synthase complex"/>
    <property type="evidence" value="ECO:0007669"/>
    <property type="project" value="UniProtKB-KW"/>
</dbReference>
<dbReference type="GO" id="GO:0005524">
    <property type="term" value="F:ATP binding"/>
    <property type="evidence" value="ECO:0007669"/>
    <property type="project" value="UniProtKB-UniRule"/>
</dbReference>
<dbReference type="GO" id="GO:0046933">
    <property type="term" value="F:proton-transporting ATP synthase activity, rotational mechanism"/>
    <property type="evidence" value="ECO:0007669"/>
    <property type="project" value="UniProtKB-UniRule"/>
</dbReference>
<dbReference type="CDD" id="cd12152">
    <property type="entry name" value="F1-ATPase_delta"/>
    <property type="match status" value="1"/>
</dbReference>
<dbReference type="FunFam" id="2.60.15.10:FF:000001">
    <property type="entry name" value="ATP synthase epsilon chain"/>
    <property type="match status" value="1"/>
</dbReference>
<dbReference type="Gene3D" id="1.20.5.440">
    <property type="entry name" value="ATP synthase delta/epsilon subunit, C-terminal domain"/>
    <property type="match status" value="1"/>
</dbReference>
<dbReference type="Gene3D" id="2.60.15.10">
    <property type="entry name" value="F0F1 ATP synthase delta/epsilon subunit, N-terminal"/>
    <property type="match status" value="1"/>
</dbReference>
<dbReference type="HAMAP" id="MF_00530">
    <property type="entry name" value="ATP_synth_epsil_bac"/>
    <property type="match status" value="1"/>
</dbReference>
<dbReference type="InterPro" id="IPR036794">
    <property type="entry name" value="ATP_F1_dsu/esu_C_sf"/>
</dbReference>
<dbReference type="InterPro" id="IPR001469">
    <property type="entry name" value="ATP_synth_F1_dsu/esu"/>
</dbReference>
<dbReference type="InterPro" id="IPR020546">
    <property type="entry name" value="ATP_synth_F1_dsu/esu_N"/>
</dbReference>
<dbReference type="InterPro" id="IPR020547">
    <property type="entry name" value="ATP_synth_F1_esu_C"/>
</dbReference>
<dbReference type="InterPro" id="IPR036771">
    <property type="entry name" value="ATPsynth_dsu/esu_N"/>
</dbReference>
<dbReference type="NCBIfam" id="TIGR01216">
    <property type="entry name" value="ATP_synt_epsi"/>
    <property type="match status" value="1"/>
</dbReference>
<dbReference type="NCBIfam" id="NF001847">
    <property type="entry name" value="PRK00571.1-4"/>
    <property type="match status" value="1"/>
</dbReference>
<dbReference type="PANTHER" id="PTHR13822">
    <property type="entry name" value="ATP SYNTHASE DELTA/EPSILON CHAIN"/>
    <property type="match status" value="1"/>
</dbReference>
<dbReference type="PANTHER" id="PTHR13822:SF10">
    <property type="entry name" value="ATP SYNTHASE EPSILON CHAIN, CHLOROPLASTIC"/>
    <property type="match status" value="1"/>
</dbReference>
<dbReference type="Pfam" id="PF00401">
    <property type="entry name" value="ATP-synt_DE"/>
    <property type="match status" value="1"/>
</dbReference>
<dbReference type="Pfam" id="PF02823">
    <property type="entry name" value="ATP-synt_DE_N"/>
    <property type="match status" value="1"/>
</dbReference>
<dbReference type="SUPFAM" id="SSF46604">
    <property type="entry name" value="Epsilon subunit of F1F0-ATP synthase C-terminal domain"/>
    <property type="match status" value="1"/>
</dbReference>
<dbReference type="SUPFAM" id="SSF51344">
    <property type="entry name" value="Epsilon subunit of F1F0-ATP synthase N-terminal domain"/>
    <property type="match status" value="1"/>
</dbReference>
<name>ATPE_BURM9</name>
<protein>
    <recommendedName>
        <fullName evidence="1">ATP synthase epsilon chain</fullName>
    </recommendedName>
    <alternativeName>
        <fullName evidence="1">ATP synthase F1 sector epsilon subunit</fullName>
    </alternativeName>
    <alternativeName>
        <fullName evidence="1">F-ATPase epsilon subunit</fullName>
    </alternativeName>
</protein>
<gene>
    <name evidence="1" type="primary">atpC</name>
    <name type="ordered locus">BMA10229_A1586</name>
</gene>
<organism>
    <name type="scientific">Burkholderia mallei (strain NCTC 10229)</name>
    <dbReference type="NCBI Taxonomy" id="412022"/>
    <lineage>
        <taxon>Bacteria</taxon>
        <taxon>Pseudomonadati</taxon>
        <taxon>Pseudomonadota</taxon>
        <taxon>Betaproteobacteria</taxon>
        <taxon>Burkholderiales</taxon>
        <taxon>Burkholderiaceae</taxon>
        <taxon>Burkholderia</taxon>
        <taxon>pseudomallei group</taxon>
    </lineage>
</organism>